<gene>
    <name type="primary">Nup160</name>
    <name type="ORF">CG4738</name>
</gene>
<reference key="1">
    <citation type="journal article" date="2009" name="Science">
        <title>Evolution of the Drosophila nuclear pore complex results in multiple hybrid incompatibilities.</title>
        <authorList>
            <person name="Tang S."/>
            <person name="Presgraves D.C."/>
        </authorList>
    </citation>
    <scope>NUCLEOTIDE SEQUENCE [GENOMIC DNA]</scope>
    <scope>FUNCTION</scope>
    <scope>IDENTIFICATION IN THE NUCLEAR PORE COMPLEX</scope>
    <scope>INTERACTION WITH NUP98</scope>
    <scope>SUBCELLULAR LOCATION</scope>
    <scope>VARIANTS LYS-57; LEU-86; LEU-127; SER-137; ALA-165; GLN-202; ALA-204; ALA-281; ILE-730 AND GLU-1408</scope>
    <source>
        <strain>s125</strain>
        <strain>s131</strain>
        <strain>s145</strain>
        <strain>s159</strain>
        <strain>s178</strain>
        <strain>s189</strain>
        <strain>s191</strain>
        <strain>s196</strain>
        <strain>s81</strain>
        <strain>s82</strain>
        <strain>s84</strain>
        <strain>s95</strain>
    </source>
</reference>
<reference key="2">
    <citation type="journal article" date="2000" name="Science">
        <title>The genome sequence of Drosophila melanogaster.</title>
        <authorList>
            <person name="Adams M.D."/>
            <person name="Celniker S.E."/>
            <person name="Holt R.A."/>
            <person name="Evans C.A."/>
            <person name="Gocayne J.D."/>
            <person name="Amanatides P.G."/>
            <person name="Scherer S.E."/>
            <person name="Li P.W."/>
            <person name="Hoskins R.A."/>
            <person name="Galle R.F."/>
            <person name="George R.A."/>
            <person name="Lewis S.E."/>
            <person name="Richards S."/>
            <person name="Ashburner M."/>
            <person name="Henderson S.N."/>
            <person name="Sutton G.G."/>
            <person name="Wortman J.R."/>
            <person name="Yandell M.D."/>
            <person name="Zhang Q."/>
            <person name="Chen L.X."/>
            <person name="Brandon R.C."/>
            <person name="Rogers Y.-H.C."/>
            <person name="Blazej R.G."/>
            <person name="Champe M."/>
            <person name="Pfeiffer B.D."/>
            <person name="Wan K.H."/>
            <person name="Doyle C."/>
            <person name="Baxter E.G."/>
            <person name="Helt G."/>
            <person name="Nelson C.R."/>
            <person name="Miklos G.L.G."/>
            <person name="Abril J.F."/>
            <person name="Agbayani A."/>
            <person name="An H.-J."/>
            <person name="Andrews-Pfannkoch C."/>
            <person name="Baldwin D."/>
            <person name="Ballew R.M."/>
            <person name="Basu A."/>
            <person name="Baxendale J."/>
            <person name="Bayraktaroglu L."/>
            <person name="Beasley E.M."/>
            <person name="Beeson K.Y."/>
            <person name="Benos P.V."/>
            <person name="Berman B.P."/>
            <person name="Bhandari D."/>
            <person name="Bolshakov S."/>
            <person name="Borkova D."/>
            <person name="Botchan M.R."/>
            <person name="Bouck J."/>
            <person name="Brokstein P."/>
            <person name="Brottier P."/>
            <person name="Burtis K.C."/>
            <person name="Busam D.A."/>
            <person name="Butler H."/>
            <person name="Cadieu E."/>
            <person name="Center A."/>
            <person name="Chandra I."/>
            <person name="Cherry J.M."/>
            <person name="Cawley S."/>
            <person name="Dahlke C."/>
            <person name="Davenport L.B."/>
            <person name="Davies P."/>
            <person name="de Pablos B."/>
            <person name="Delcher A."/>
            <person name="Deng Z."/>
            <person name="Mays A.D."/>
            <person name="Dew I."/>
            <person name="Dietz S.M."/>
            <person name="Dodson K."/>
            <person name="Doup L.E."/>
            <person name="Downes M."/>
            <person name="Dugan-Rocha S."/>
            <person name="Dunkov B.C."/>
            <person name="Dunn P."/>
            <person name="Durbin K.J."/>
            <person name="Evangelista C.C."/>
            <person name="Ferraz C."/>
            <person name="Ferriera S."/>
            <person name="Fleischmann W."/>
            <person name="Fosler C."/>
            <person name="Gabrielian A.E."/>
            <person name="Garg N.S."/>
            <person name="Gelbart W.M."/>
            <person name="Glasser K."/>
            <person name="Glodek A."/>
            <person name="Gong F."/>
            <person name="Gorrell J.H."/>
            <person name="Gu Z."/>
            <person name="Guan P."/>
            <person name="Harris M."/>
            <person name="Harris N.L."/>
            <person name="Harvey D.A."/>
            <person name="Heiman T.J."/>
            <person name="Hernandez J.R."/>
            <person name="Houck J."/>
            <person name="Hostin D."/>
            <person name="Houston K.A."/>
            <person name="Howland T.J."/>
            <person name="Wei M.-H."/>
            <person name="Ibegwam C."/>
            <person name="Jalali M."/>
            <person name="Kalush F."/>
            <person name="Karpen G.H."/>
            <person name="Ke Z."/>
            <person name="Kennison J.A."/>
            <person name="Ketchum K.A."/>
            <person name="Kimmel B.E."/>
            <person name="Kodira C.D."/>
            <person name="Kraft C.L."/>
            <person name="Kravitz S."/>
            <person name="Kulp D."/>
            <person name="Lai Z."/>
            <person name="Lasko P."/>
            <person name="Lei Y."/>
            <person name="Levitsky A.A."/>
            <person name="Li J.H."/>
            <person name="Li Z."/>
            <person name="Liang Y."/>
            <person name="Lin X."/>
            <person name="Liu X."/>
            <person name="Mattei B."/>
            <person name="McIntosh T.C."/>
            <person name="McLeod M.P."/>
            <person name="McPherson D."/>
            <person name="Merkulov G."/>
            <person name="Milshina N.V."/>
            <person name="Mobarry C."/>
            <person name="Morris J."/>
            <person name="Moshrefi A."/>
            <person name="Mount S.M."/>
            <person name="Moy M."/>
            <person name="Murphy B."/>
            <person name="Murphy L."/>
            <person name="Muzny D.M."/>
            <person name="Nelson D.L."/>
            <person name="Nelson D.R."/>
            <person name="Nelson K.A."/>
            <person name="Nixon K."/>
            <person name="Nusskern D.R."/>
            <person name="Pacleb J.M."/>
            <person name="Palazzolo M."/>
            <person name="Pittman G.S."/>
            <person name="Pan S."/>
            <person name="Pollard J."/>
            <person name="Puri V."/>
            <person name="Reese M.G."/>
            <person name="Reinert K."/>
            <person name="Remington K."/>
            <person name="Saunders R.D.C."/>
            <person name="Scheeler F."/>
            <person name="Shen H."/>
            <person name="Shue B.C."/>
            <person name="Siden-Kiamos I."/>
            <person name="Simpson M."/>
            <person name="Skupski M.P."/>
            <person name="Smith T.J."/>
            <person name="Spier E."/>
            <person name="Spradling A.C."/>
            <person name="Stapleton M."/>
            <person name="Strong R."/>
            <person name="Sun E."/>
            <person name="Svirskas R."/>
            <person name="Tector C."/>
            <person name="Turner R."/>
            <person name="Venter E."/>
            <person name="Wang A.H."/>
            <person name="Wang X."/>
            <person name="Wang Z.-Y."/>
            <person name="Wassarman D.A."/>
            <person name="Weinstock G.M."/>
            <person name="Weissenbach J."/>
            <person name="Williams S.M."/>
            <person name="Woodage T."/>
            <person name="Worley K.C."/>
            <person name="Wu D."/>
            <person name="Yang S."/>
            <person name="Yao Q.A."/>
            <person name="Ye J."/>
            <person name="Yeh R.-F."/>
            <person name="Zaveri J.S."/>
            <person name="Zhan M."/>
            <person name="Zhang G."/>
            <person name="Zhao Q."/>
            <person name="Zheng L."/>
            <person name="Zheng X.H."/>
            <person name="Zhong F.N."/>
            <person name="Zhong W."/>
            <person name="Zhou X."/>
            <person name="Zhu S.C."/>
            <person name="Zhu X."/>
            <person name="Smith H.O."/>
            <person name="Gibbs R.A."/>
            <person name="Myers E.W."/>
            <person name="Rubin G.M."/>
            <person name="Venter J.C."/>
        </authorList>
    </citation>
    <scope>NUCLEOTIDE SEQUENCE [LARGE SCALE GENOMIC DNA]</scope>
    <source>
        <strain>Berkeley</strain>
    </source>
</reference>
<reference key="3">
    <citation type="journal article" date="2002" name="Genome Biol.">
        <title>Annotation of the Drosophila melanogaster euchromatic genome: a systematic review.</title>
        <authorList>
            <person name="Misra S."/>
            <person name="Crosby M.A."/>
            <person name="Mungall C.J."/>
            <person name="Matthews B.B."/>
            <person name="Campbell K.S."/>
            <person name="Hradecky P."/>
            <person name="Huang Y."/>
            <person name="Kaminker J.S."/>
            <person name="Millburn G.H."/>
            <person name="Prochnik S.E."/>
            <person name="Smith C.D."/>
            <person name="Tupy J.L."/>
            <person name="Whitfield E.J."/>
            <person name="Bayraktaroglu L."/>
            <person name="Berman B.P."/>
            <person name="Bettencourt B.R."/>
            <person name="Celniker S.E."/>
            <person name="de Grey A.D.N.J."/>
            <person name="Drysdale R.A."/>
            <person name="Harris N.L."/>
            <person name="Richter J."/>
            <person name="Russo S."/>
            <person name="Schroeder A.J."/>
            <person name="Shu S.Q."/>
            <person name="Stapleton M."/>
            <person name="Yamada C."/>
            <person name="Ashburner M."/>
            <person name="Gelbart W.M."/>
            <person name="Rubin G.M."/>
            <person name="Lewis S.E."/>
        </authorList>
    </citation>
    <scope>GENOME REANNOTATION</scope>
    <source>
        <strain>Berkeley</strain>
    </source>
</reference>
<reference key="4">
    <citation type="submission" date="2006-11" db="EMBL/GenBank/DDBJ databases">
        <authorList>
            <person name="Stapleton M."/>
            <person name="Carlson J.W."/>
            <person name="Frise E."/>
            <person name="Kapadia B."/>
            <person name="Park S."/>
            <person name="Wan K.H."/>
            <person name="Yu C."/>
            <person name="Celniker S.E."/>
        </authorList>
    </citation>
    <scope>NUCLEOTIDE SEQUENCE [LARGE SCALE MRNA]</scope>
    <source>
        <strain>Berkeley</strain>
        <tissue>Embryo</tissue>
    </source>
</reference>
<reference key="5">
    <citation type="journal article" date="2010" name="Mol. Cell. Biol.">
        <title>Specific nucleoporin requirement for Smad nuclear translocation.</title>
        <authorList>
            <person name="Chen X."/>
            <person name="Xu L."/>
        </authorList>
    </citation>
    <scope>FUNCTION</scope>
</reference>
<reference key="6">
    <citation type="journal article" date="2015" name="Nat. Cell Biol.">
        <title>Heterochromatic breaks move to the nuclear periphery to continue recombinational repair.</title>
        <authorList>
            <person name="Ryu T."/>
            <person name="Spatola B."/>
            <person name="Delabaere L."/>
            <person name="Bowlin K."/>
            <person name="Hopp H."/>
            <person name="Kunitake R."/>
            <person name="Karpen G.H."/>
            <person name="Chiolo I."/>
        </authorList>
    </citation>
    <scope>FUNCTION</scope>
</reference>
<reference key="7">
    <citation type="journal article" date="2019" name="J. Am. Soc. Nephrol.">
        <title>Mutations in NUP160 Are Implicated in Steroid-Resistant Nephrotic Syndrome.</title>
        <authorList>
            <person name="Zhao F."/>
            <person name="Zhu J.Y."/>
            <person name="Richman A."/>
            <person name="Fu Y."/>
            <person name="Huang W."/>
            <person name="Chen N."/>
            <person name="Pan X."/>
            <person name="Yi C."/>
            <person name="Ding X."/>
            <person name="Wang S."/>
            <person name="Wang P."/>
            <person name="Nie X."/>
            <person name="Huang J."/>
            <person name="Yang Y."/>
            <person name="Yu Z."/>
            <person name="Han Z."/>
        </authorList>
    </citation>
    <scope>FUNCTION</scope>
    <scope>DISRUPTION PHENOTYPE</scope>
</reference>
<feature type="chain" id="PRO_0000204850" description="Nuclear pore complex protein Nup160 homolog">
    <location>
        <begin position="1"/>
        <end position="1411"/>
    </location>
</feature>
<feature type="sequence variant" description="In strain: s81 and s196." evidence="2">
    <original>N</original>
    <variation>K</variation>
    <location>
        <position position="57"/>
    </location>
</feature>
<feature type="sequence variant" description="In strain: s82 and s84." evidence="2">
    <original>Q</original>
    <variation>L</variation>
    <location>
        <position position="86"/>
    </location>
</feature>
<feature type="sequence variant" description="In strain: s82." evidence="2">
    <original>P</original>
    <variation>L</variation>
    <location>
        <position position="127"/>
    </location>
</feature>
<feature type="sequence variant" description="In strain: s131." evidence="2">
    <original>A</original>
    <variation>S</variation>
    <location>
        <position position="137"/>
    </location>
</feature>
<feature type="sequence variant" description="In strain: s95." evidence="2">
    <original>T</original>
    <variation>A</variation>
    <location>
        <position position="165"/>
    </location>
</feature>
<feature type="sequence variant" description="In strain: s95." evidence="2">
    <original>K</original>
    <variation>Q</variation>
    <location>
        <position position="202"/>
    </location>
</feature>
<feature type="sequence variant" description="In strain: s81, s95, s125, s131 and s196." evidence="2">
    <original>S</original>
    <variation>A</variation>
    <location>
        <position position="204"/>
    </location>
</feature>
<feature type="sequence variant" description="In strain: s81 and s196." evidence="2">
    <original>T</original>
    <variation>A</variation>
    <location>
        <position position="281"/>
    </location>
</feature>
<feature type="sequence variant" description="In strain: s189." evidence="2">
    <original>T</original>
    <variation>I</variation>
    <location>
        <position position="730"/>
    </location>
</feature>
<feature type="sequence variant" description="In strain: s191." evidence="2">
    <original>Q</original>
    <variation>E</variation>
    <location>
        <position position="1408"/>
    </location>
</feature>
<evidence type="ECO:0000250" key="1">
    <source>
        <dbReference type="UniProtKB" id="Q12769"/>
    </source>
</evidence>
<evidence type="ECO:0000269" key="2">
    <source>
    </source>
</evidence>
<evidence type="ECO:0000269" key="3">
    <source>
    </source>
</evidence>
<evidence type="ECO:0000269" key="4">
    <source>
    </source>
</evidence>
<evidence type="ECO:0000269" key="5">
    <source>
    </source>
</evidence>
<name>NU160_DROME</name>
<comment type="function">
    <text evidence="1 2 3 4 5">Functions as a component of the nuclear pore complex (NPC) (PubMed:19197064). Involved in poly(A)+ RNA transport (By similarity). Required for nuclear import of Mad (PubMed:20547758). May play a role in double strand break DNA repair (PubMed:26502056). Essential for nephrocyte development (PubMed:30910934).</text>
</comment>
<comment type="subunit">
    <text evidence="2">Part of the nuclear pore complex (PubMed:19197064). Interacts with Nup98 (PubMed:19197064).</text>
</comment>
<comment type="subcellular location">
    <subcellularLocation>
        <location evidence="2">Nucleus</location>
        <location evidence="2">Nuclear pore complex</location>
    </subcellularLocation>
</comment>
<comment type="disruption phenotype">
    <text evidence="5">RNAi-mediated knockdown in nephrocytes alters their cell morphology and function (PubMed:30910934). Reduces total number of nephrocytes starting from larval stage and results in shortened lifespan (PubMed:30910934).</text>
</comment>
<accession>Q9VKJ3</accession>
<accession>C0KG65</accession>
<accession>C0KG66</accession>
<accession>C0KG67</accession>
<accession>C0KG68</accession>
<accession>C0KG69</accession>
<accession>C0KG70</accession>
<accession>C0KG71</accession>
<accession>C0KG74</accession>
<accession>C0KG75</accession>
<accession>Q6AWI7</accession>
<dbReference type="EMBL" id="FJ600378">
    <property type="protein sequence ID" value="ACM79337.1"/>
    <property type="molecule type" value="Genomic_DNA"/>
</dbReference>
<dbReference type="EMBL" id="FJ600379">
    <property type="protein sequence ID" value="ACM79338.1"/>
    <property type="molecule type" value="Genomic_DNA"/>
</dbReference>
<dbReference type="EMBL" id="FJ600380">
    <property type="protein sequence ID" value="ACM79339.1"/>
    <property type="molecule type" value="Genomic_DNA"/>
</dbReference>
<dbReference type="EMBL" id="FJ600381">
    <property type="protein sequence ID" value="ACM79340.1"/>
    <property type="molecule type" value="Genomic_DNA"/>
</dbReference>
<dbReference type="EMBL" id="FJ600382">
    <property type="protein sequence ID" value="ACM79341.1"/>
    <property type="molecule type" value="Genomic_DNA"/>
</dbReference>
<dbReference type="EMBL" id="FJ600383">
    <property type="protein sequence ID" value="ACM79342.1"/>
    <property type="molecule type" value="Genomic_DNA"/>
</dbReference>
<dbReference type="EMBL" id="FJ600384">
    <property type="protein sequence ID" value="ACM79343.1"/>
    <property type="molecule type" value="Genomic_DNA"/>
</dbReference>
<dbReference type="EMBL" id="FJ600385">
    <property type="protein sequence ID" value="ACM79344.1"/>
    <property type="molecule type" value="Genomic_DNA"/>
</dbReference>
<dbReference type="EMBL" id="FJ600386">
    <property type="protein sequence ID" value="ACM79345.1"/>
    <property type="molecule type" value="Genomic_DNA"/>
</dbReference>
<dbReference type="EMBL" id="FJ600387">
    <property type="protein sequence ID" value="ACM79346.1"/>
    <property type="molecule type" value="Genomic_DNA"/>
</dbReference>
<dbReference type="EMBL" id="FJ600388">
    <property type="protein sequence ID" value="ACM79347.1"/>
    <property type="molecule type" value="Genomic_DNA"/>
</dbReference>
<dbReference type="EMBL" id="FJ600389">
    <property type="protein sequence ID" value="ACM79348.1"/>
    <property type="molecule type" value="Genomic_DNA"/>
</dbReference>
<dbReference type="EMBL" id="AE014134">
    <property type="protein sequence ID" value="AAF53075.1"/>
    <property type="molecule type" value="Genomic_DNA"/>
</dbReference>
<dbReference type="EMBL" id="BT015261">
    <property type="protein sequence ID" value="AAT94490.1"/>
    <property type="molecule type" value="mRNA"/>
</dbReference>
<dbReference type="RefSeq" id="NP_001285832.1">
    <property type="nucleotide sequence ID" value="NM_001298903.1"/>
</dbReference>
<dbReference type="RefSeq" id="NP_609493.1">
    <property type="nucleotide sequence ID" value="NM_135649.2"/>
</dbReference>
<dbReference type="SMR" id="Q9VKJ3"/>
<dbReference type="BioGRID" id="60611">
    <property type="interactions" value="4"/>
</dbReference>
<dbReference type="ComplexPortal" id="CPX-2568">
    <property type="entry name" value="Nuclear pore complex"/>
</dbReference>
<dbReference type="FunCoup" id="Q9VKJ3">
    <property type="interactions" value="1726"/>
</dbReference>
<dbReference type="IntAct" id="Q9VKJ3">
    <property type="interactions" value="1"/>
</dbReference>
<dbReference type="STRING" id="7227.FBpp0079788"/>
<dbReference type="PaxDb" id="7227-FBpp0079788"/>
<dbReference type="DNASU" id="34549"/>
<dbReference type="EnsemblMetazoa" id="FBtr0080199">
    <property type="protein sequence ID" value="FBpp0079788"/>
    <property type="gene ID" value="FBgn0262647"/>
</dbReference>
<dbReference type="EnsemblMetazoa" id="FBtr0343613">
    <property type="protein sequence ID" value="FBpp0310208"/>
    <property type="gene ID" value="FBgn0262647"/>
</dbReference>
<dbReference type="GeneID" id="34549"/>
<dbReference type="KEGG" id="dme:Dmel_CG4738"/>
<dbReference type="UCSC" id="CG4738-RA">
    <property type="organism name" value="d. melanogaster"/>
</dbReference>
<dbReference type="AGR" id="FB:FBgn0262647"/>
<dbReference type="CTD" id="23279"/>
<dbReference type="FlyBase" id="FBgn0262647">
    <property type="gene designation" value="Nup160"/>
</dbReference>
<dbReference type="VEuPathDB" id="VectorBase:FBgn0262647"/>
<dbReference type="eggNOG" id="KOG4521">
    <property type="taxonomic scope" value="Eukaryota"/>
</dbReference>
<dbReference type="HOGENOM" id="CLU_005083_0_0_1"/>
<dbReference type="InParanoid" id="Q9VKJ3"/>
<dbReference type="OMA" id="TLWKNNM"/>
<dbReference type="OrthoDB" id="67716at2759"/>
<dbReference type="PhylomeDB" id="Q9VKJ3"/>
<dbReference type="Reactome" id="R-DME-159227">
    <property type="pathway name" value="Transport of the SLBP independent Mature mRNA"/>
</dbReference>
<dbReference type="Reactome" id="R-DME-159230">
    <property type="pathway name" value="Transport of the SLBP Dependant Mature mRNA"/>
</dbReference>
<dbReference type="Reactome" id="R-DME-159231">
    <property type="pathway name" value="Transport of Mature mRNA Derived from an Intronless Transcript"/>
</dbReference>
<dbReference type="Reactome" id="R-DME-159236">
    <property type="pathway name" value="Transport of Mature mRNA derived from an Intron-Containing Transcript"/>
</dbReference>
<dbReference type="Reactome" id="R-DME-3108214">
    <property type="pathway name" value="SUMOylation of DNA damage response and repair proteins"/>
</dbReference>
<dbReference type="Reactome" id="R-DME-3301854">
    <property type="pathway name" value="Nuclear Pore Complex (NPC) Disassembly"/>
</dbReference>
<dbReference type="Reactome" id="R-DME-4085377">
    <property type="pathway name" value="SUMOylation of SUMOylation proteins"/>
</dbReference>
<dbReference type="Reactome" id="R-DME-4551638">
    <property type="pathway name" value="SUMOylation of chromatin organization proteins"/>
</dbReference>
<dbReference type="Reactome" id="R-DME-4615885">
    <property type="pathway name" value="SUMOylation of DNA replication proteins"/>
</dbReference>
<dbReference type="Reactome" id="R-DME-5578749">
    <property type="pathway name" value="Transcriptional regulation by small RNAs"/>
</dbReference>
<dbReference type="Reactome" id="R-DME-9615933">
    <property type="pathway name" value="Postmitotic nuclear pore complex (NPC) reformation"/>
</dbReference>
<dbReference type="SignaLink" id="Q9VKJ3"/>
<dbReference type="BioGRID-ORCS" id="34549">
    <property type="hits" value="1 hit in 1 CRISPR screen"/>
</dbReference>
<dbReference type="GenomeRNAi" id="34549"/>
<dbReference type="PRO" id="PR:Q9VKJ3"/>
<dbReference type="Proteomes" id="UP000000803">
    <property type="component" value="Chromosome 2L"/>
</dbReference>
<dbReference type="Bgee" id="FBgn0262647">
    <property type="expression patterns" value="Expressed in mid-late elongation-stage spermatid (Drosophila) in testis and 48 other cell types or tissues"/>
</dbReference>
<dbReference type="ExpressionAtlas" id="Q9VKJ3">
    <property type="expression patterns" value="baseline and differential"/>
</dbReference>
<dbReference type="GO" id="GO:0005643">
    <property type="term" value="C:nuclear pore"/>
    <property type="evidence" value="ECO:0000314"/>
    <property type="project" value="UniProtKB"/>
</dbReference>
<dbReference type="GO" id="GO:0031080">
    <property type="term" value="C:nuclear pore outer ring"/>
    <property type="evidence" value="ECO:0000250"/>
    <property type="project" value="FlyBase"/>
</dbReference>
<dbReference type="GO" id="GO:0017056">
    <property type="term" value="F:structural constituent of nuclear pore"/>
    <property type="evidence" value="ECO:0000250"/>
    <property type="project" value="FlyBase"/>
</dbReference>
<dbReference type="GO" id="GO:0000724">
    <property type="term" value="P:double-strand break repair via homologous recombination"/>
    <property type="evidence" value="ECO:0000315"/>
    <property type="project" value="FlyBase"/>
</dbReference>
<dbReference type="GO" id="GO:0006406">
    <property type="term" value="P:mRNA export from nucleus"/>
    <property type="evidence" value="ECO:0000250"/>
    <property type="project" value="FlyBase"/>
</dbReference>
<dbReference type="GO" id="GO:0006606">
    <property type="term" value="P:protein import into nucleus"/>
    <property type="evidence" value="ECO:0000315"/>
    <property type="project" value="FlyBase"/>
</dbReference>
<dbReference type="GO" id="GO:0046822">
    <property type="term" value="P:regulation of nucleocytoplasmic transport"/>
    <property type="evidence" value="ECO:0000315"/>
    <property type="project" value="FlyBase"/>
</dbReference>
<dbReference type="InterPro" id="IPR021717">
    <property type="entry name" value="Nucleoporin_Nup160"/>
</dbReference>
<dbReference type="InterPro" id="IPR056547">
    <property type="entry name" value="NUP160_helical"/>
</dbReference>
<dbReference type="InterPro" id="IPR056536">
    <property type="entry name" value="TPR_NUP160_C"/>
</dbReference>
<dbReference type="InterPro" id="IPR056535">
    <property type="entry name" value="TPR_NUP160_M"/>
</dbReference>
<dbReference type="PANTHER" id="PTHR21286">
    <property type="entry name" value="NUCLEAR PORE COMPLEX PROTEIN NUP160"/>
    <property type="match status" value="1"/>
</dbReference>
<dbReference type="PANTHER" id="PTHR21286:SF0">
    <property type="entry name" value="NUCLEAR PORE COMPLEX PROTEIN NUP160"/>
    <property type="match status" value="1"/>
</dbReference>
<dbReference type="Pfam" id="PF11715">
    <property type="entry name" value="Beta-prop_Nup120_160"/>
    <property type="match status" value="1"/>
</dbReference>
<dbReference type="Pfam" id="PF23345">
    <property type="entry name" value="NUP160_helical"/>
    <property type="match status" value="1"/>
</dbReference>
<dbReference type="Pfam" id="PF23354">
    <property type="entry name" value="TPR_NUP160_120_M"/>
    <property type="match status" value="1"/>
</dbReference>
<dbReference type="Pfam" id="PF23347">
    <property type="entry name" value="TPR_Nup160_C"/>
    <property type="match status" value="1"/>
</dbReference>
<protein>
    <recommendedName>
        <fullName>Nuclear pore complex protein Nup160 homolog</fullName>
    </recommendedName>
    <alternativeName>
        <fullName>Nuclear pore protein 160</fullName>
    </alternativeName>
</protein>
<proteinExistence type="evidence at protein level"/>
<organism>
    <name type="scientific">Drosophila melanogaster</name>
    <name type="common">Fruit fly</name>
    <dbReference type="NCBI Taxonomy" id="7227"/>
    <lineage>
        <taxon>Eukaryota</taxon>
        <taxon>Metazoa</taxon>
        <taxon>Ecdysozoa</taxon>
        <taxon>Arthropoda</taxon>
        <taxon>Hexapoda</taxon>
        <taxon>Insecta</taxon>
        <taxon>Pterygota</taxon>
        <taxon>Neoptera</taxon>
        <taxon>Endopterygota</taxon>
        <taxon>Diptera</taxon>
        <taxon>Brachycera</taxon>
        <taxon>Muscomorpha</taxon>
        <taxon>Ephydroidea</taxon>
        <taxon>Drosophilidae</taxon>
        <taxon>Drosophila</taxon>
        <taxon>Sophophora</taxon>
    </lineage>
</organism>
<keyword id="KW-0227">DNA damage</keyword>
<keyword id="KW-0509">mRNA transport</keyword>
<keyword id="KW-0906">Nuclear pore complex</keyword>
<keyword id="KW-0539">Nucleus</keyword>
<keyword id="KW-0653">Protein transport</keyword>
<keyword id="KW-1185">Reference proteome</keyword>
<keyword id="KW-0811">Translocation</keyword>
<keyword id="KW-0813">Transport</keyword>
<sequence length="1411" mass="160276">MPTSKLQANMSYREVIPRNLSPAEWIEVKINTGTQSTLQDLKTFETSGGYCYKNTKNVQTRNRFIYWRTYQDVLELSEVSLDISLQRNHLRLRFTDSAVLNVSLTEQGTSVTLLVVTVSSVHRYVFPLKVAGQEGGAASPEDLLSQSIFYDVNDKINDPSTYYVTDGFGTMPNAAVSYLTQDSQSAYFAVAYQSKLLLHVMKCSTGHTITHEIKEPKLMPWFLSNLKGALTGRSETLEAATSMAFSEIGGEIFILVLYRNNELRLWSVDNLQTVASINCSTELGQDSAAQGPQNSQLRKISDQNFCLFLSHNSRAEFICVSIMPDADDASVINLVQNMVPAPQTDLVDFDATSSHIWALWSNAEGDFHVSAAYFASNNAIKWVSAALEPPPDRYCLTMEQGVDPRETYCSYIFHPGRFDRNVIAKALYMFRRVNLQFDVKQLSMSVLKEQVCQAVEDEIQNELKDFVVTDEEYLEISTRLWDRFYSCCEQYHIKLSEPTGLAVLGGMDAVCLVRRQSFALLRPCEVLEHLLLIGEHNDEVATYVAPLFRNDPEMAKGFVELMNVVTLLDKLISEDIKIELDKQLYQRESPVEVISKLVARISMIDDNGPILPSNCVRQIQQKLQNIPNLEPALEMLLDVLCMIDPDEPPHDYSLSTRFLQSSGALMGSEYGLSILSETVKQMAMIRFSVCRNLLVLQYMAYGQNEMESENVLTNLNYLNSYYTLVWIAETPISSSTPAGFEASIQRLSRAQLFSGYNRPYSSHLKHNGNDQTTLLRLFLESKGLFSALTMLLKHDSLSLDSEQLNLRQSLLQLVGYINKMLWPGSPIYVFPEWLFGTCHHIIVQDYVRILSNWCSVQKHARRFMLAVSLLDCGEAHKAVHLFHEAESGIVEDDFLFEHVLKNTPLYGKLQNSVSRGDTISPEDTKLAIVHYYLKVIQLFEQHSALDYIIQLADMAIRVLQPDDPQLPMFQSIVFNNHLQLGHYVEAYTALVNNADISRRKDCLRQLVITLFQNKCLPLLMQFSYIGLQDEFESIVESRARSMSIDQNEVYNFLYAFHTNKGNMRKASTVMYEQAMRFQVDSDAPNALEKRCSSLLICLNCLHLVDSRYRWIAKPVLGDEQVITIDQDNDDGEPKCDEDKRGQEVVVLELADIRRELVHAEALRELSFYRKDTAAYERATPEELSYLLASSGLYTAALKLSRGHSFSVLPIFESLTSACVAATEDKSSDAWNWLQNNDMADLPHRSNAADMAWTLLQKLVVDNEAKDSTLIRKSVVQRLLGLNAFLPQWLINSYKLSHSRELLHLLVKHNRLLEAADLGCEIIAGMLGAGSEYFEFKHAVNIANPQLCFPISTIDLLLHGLKINGKDDLDYEMAYFKLEEEVQRYIETIKRTTDDKMSMAVLQMRTDLQEER</sequence>